<sequence length="899" mass="105030">MNKHDQKKKRNKQHTDNVMGKKSKGFIKNKKNIGESGNEKKRNNNFNNIWKKKKRSGNSEKDQVDILGLLKGDSENMNDDDDNNMNDDYNNNNIKGDYNNNNIKDDDVDDDDYDDDDDDNFDENKNCNDNCSSKHKRNVPSKKEHDILELNNINFNETRKKMINYKNIFDGKFCDLKYILSESLINTLEKNEFIKMTSIQKMSIPLFFKPNDIFLKSMTGSGKTLCYAIPSIEKILNMKEKVKITRDMGIFVLVLSPTRELAIQINNLFCILTKPYPYIVASCITGGEKKKSEKNRLKKGISILTCTPGRLLDHLENTKSLKLTFLKMVILDEADKIIYLGTQDKIKLIYDMIRKIKQEEFSKVHKKKKKEENEVLDHINDTNMSDMNNISNDHSNDYEQFILDKFQMIFISATLNHAMKTLANYCLTNNTMWIEKEKKNGINGGNKNDETKQKSNDMISCMNRENSPLNIHNNDDNDDNDDNDENNGDNNNNNDDNNNNNDDNNNKNNDDDNNNTYELPEQLKQYCILIDMKQKFICLIYMLLDCIEKKKKPVVFLSNHHSVEYLQILLKNIYWPTDVNKKNIEVNKKLNEKITPVLEREDEKLLRKHLEQNILNNNYYNNNYNVGNISYKNINLEEIQNEDELNDEPGNLYNINADKHKRIYLFNNVNIYILHGNLSKEDRLGNFMDFSKTNNSILLCTDIISRGIHFDSLSVVIQYDPPQILEEYIHKVGRTARLNKQGSAYLFLLKSQKQFLNILKNKNIQLKIILGNTIINHFKKFCIPNFLKSVGKDILNFLHNHMQTIVKSNNTLMEKGTSAFLCTITSFYSTSKNLRSIFNAKDIHLGHLAYTFLLEKTPKQISKYKKEQNYINIKKQTVLSKKEKRLLKSKQFQKKQKRK</sequence>
<name>DDX31_PLAF7</name>
<evidence type="ECO:0000255" key="1">
    <source>
        <dbReference type="PROSITE-ProRule" id="PRU00541"/>
    </source>
</evidence>
<evidence type="ECO:0000255" key="2">
    <source>
        <dbReference type="PROSITE-ProRule" id="PRU00542"/>
    </source>
</evidence>
<evidence type="ECO:0000255" key="3">
    <source>
        <dbReference type="PROSITE-ProRule" id="PRU00552"/>
    </source>
</evidence>
<evidence type="ECO:0000255" key="4">
    <source>
        <dbReference type="RuleBase" id="RU365068"/>
    </source>
</evidence>
<evidence type="ECO:0000256" key="5">
    <source>
        <dbReference type="SAM" id="MobiDB-lite"/>
    </source>
</evidence>
<evidence type="ECO:0000269" key="6">
    <source>
    </source>
</evidence>
<evidence type="ECO:0000305" key="7">
    <source>
    </source>
</evidence>
<evidence type="ECO:0000312" key="8">
    <source>
        <dbReference type="EMBL" id="CAD50961.1"/>
    </source>
</evidence>
<evidence type="ECO:0000312" key="9">
    <source>
        <dbReference type="Proteomes" id="UP000001450"/>
    </source>
</evidence>
<comment type="function">
    <text evidence="6">Has DNA helicase activity and may also have RNA helicase activity; the DNA helicase direction was not determined (PubMed:31872112). Shows ssDNA and RNA dependent ATPase activity (PubMed:31872112).</text>
</comment>
<comment type="catalytic activity">
    <reaction evidence="6">
        <text>ATP + H2O = ADP + phosphate + H(+)</text>
        <dbReference type="Rhea" id="RHEA:13065"/>
        <dbReference type="ChEBI" id="CHEBI:15377"/>
        <dbReference type="ChEBI" id="CHEBI:15378"/>
        <dbReference type="ChEBI" id="CHEBI:30616"/>
        <dbReference type="ChEBI" id="CHEBI:43474"/>
        <dbReference type="ChEBI" id="CHEBI:456216"/>
    </reaction>
    <physiologicalReaction direction="left-to-right" evidence="6">
        <dbReference type="Rhea" id="RHEA:13066"/>
    </physiologicalReaction>
</comment>
<comment type="subcellular location">
    <subcellularLocation>
        <location evidence="6">Nucleus</location>
        <location evidence="6">Nucleolus</location>
    </subcellularLocation>
</comment>
<comment type="domain">
    <text evidence="4">The Q motif is unique to and characteristic of the DEAD box family of RNA helicases and controls ATP binding and hydrolysis.</text>
</comment>
<comment type="similarity">
    <text evidence="4">Belongs to the DEAD box helicase family. DDX31/DBP7 subfamily.</text>
</comment>
<keyword id="KW-0067">ATP-binding</keyword>
<keyword id="KW-0347">Helicase</keyword>
<keyword id="KW-0378">Hydrolase</keyword>
<keyword id="KW-0413">Isomerase</keyword>
<keyword id="KW-0488">Methylation</keyword>
<keyword id="KW-0547">Nucleotide-binding</keyword>
<keyword id="KW-0539">Nucleus</keyword>
<keyword id="KW-1185">Reference proteome</keyword>
<keyword id="KW-0694">RNA-binding</keyword>
<gene>
    <name type="primary">DDX31</name>
    <name evidence="8" type="ORF">PF3D7_0721300</name>
    <name type="ORF">PfDDX31</name>
</gene>
<protein>
    <recommendedName>
        <fullName>ATP-dependent DNA helicase DDX31</fullName>
        <ecNumber evidence="6">5.6.2.-</ecNumber>
    </recommendedName>
    <alternativeName>
        <fullName>Probable ATP-dependent RNA helicase DDX31</fullName>
        <ecNumber evidence="7">5.6.2.-</ecNumber>
    </alternativeName>
</protein>
<feature type="chain" id="PRO_0000459489" description="ATP-dependent DNA helicase DDX31">
    <location>
        <begin position="1"/>
        <end position="899"/>
    </location>
</feature>
<feature type="domain" description="Helicase ATP-binding" evidence="1">
    <location>
        <begin position="204"/>
        <end position="433"/>
    </location>
</feature>
<feature type="domain" description="Helicase C-terminal" evidence="2">
    <location>
        <begin position="593"/>
        <end position="782"/>
    </location>
</feature>
<feature type="region of interest" description="Disordered" evidence="5">
    <location>
        <begin position="1"/>
        <end position="142"/>
    </location>
</feature>
<feature type="region of interest" description="Disordered" evidence="5">
    <location>
        <begin position="463"/>
        <end position="517"/>
    </location>
</feature>
<feature type="short sequence motif" description="Q motif" evidence="3">
    <location>
        <begin position="173"/>
        <end position="201"/>
    </location>
</feature>
<feature type="short sequence motif" description="DEAD box" evidence="1">
    <location>
        <begin position="332"/>
        <end position="335"/>
    </location>
</feature>
<feature type="compositionally biased region" description="Basic residues" evidence="5">
    <location>
        <begin position="1"/>
        <end position="12"/>
    </location>
</feature>
<feature type="compositionally biased region" description="Basic residues" evidence="5">
    <location>
        <begin position="21"/>
        <end position="31"/>
    </location>
</feature>
<feature type="compositionally biased region" description="Acidic residues" evidence="5">
    <location>
        <begin position="76"/>
        <end position="85"/>
    </location>
</feature>
<feature type="compositionally biased region" description="Low complexity" evidence="5">
    <location>
        <begin position="86"/>
        <end position="102"/>
    </location>
</feature>
<feature type="compositionally biased region" description="Acidic residues" evidence="5">
    <location>
        <begin position="106"/>
        <end position="121"/>
    </location>
</feature>
<feature type="compositionally biased region" description="Polar residues" evidence="5">
    <location>
        <begin position="463"/>
        <end position="472"/>
    </location>
</feature>
<feature type="compositionally biased region" description="Acidic residues" evidence="5">
    <location>
        <begin position="476"/>
        <end position="487"/>
    </location>
</feature>
<feature type="compositionally biased region" description="Low complexity" evidence="5">
    <location>
        <begin position="488"/>
        <end position="503"/>
    </location>
</feature>
<feature type="binding site" evidence="1">
    <location>
        <begin position="217"/>
        <end position="224"/>
    </location>
    <ligand>
        <name>ATP</name>
        <dbReference type="ChEBI" id="CHEBI:30616"/>
    </ligand>
</feature>
<feature type="mutagenesis site" description="Decreases ATPase activity and loss of helicase activity." evidence="6">
    <original>K</original>
    <variation>E</variation>
    <location>
        <position position="223"/>
    </location>
</feature>
<proteinExistence type="evidence at protein level"/>
<accession>Q8IBN8</accession>
<dbReference type="EC" id="5.6.2.-" evidence="6 7"/>
<dbReference type="EMBL" id="AL844506">
    <property type="protein sequence ID" value="CAD50961.1"/>
    <property type="molecule type" value="Genomic_DNA"/>
</dbReference>
<dbReference type="RefSeq" id="XP_001349115.1">
    <property type="nucleotide sequence ID" value="XM_001349079.1"/>
</dbReference>
<dbReference type="FunCoup" id="Q8IBN8">
    <property type="interactions" value="3"/>
</dbReference>
<dbReference type="STRING" id="36329.Q8IBN8"/>
<dbReference type="PaxDb" id="5833-MAL7P1.113"/>
<dbReference type="EnsemblProtists" id="CAD50961">
    <property type="protein sequence ID" value="CAD50961"/>
    <property type="gene ID" value="PF3D7_0721300"/>
</dbReference>
<dbReference type="GeneID" id="2654935"/>
<dbReference type="KEGG" id="pfa:PF3D7_0721300"/>
<dbReference type="VEuPathDB" id="PlasmoDB:PF3D7_0721300"/>
<dbReference type="HOGENOM" id="CLU_003041_26_2_1"/>
<dbReference type="InParanoid" id="Q8IBN8"/>
<dbReference type="OMA" id="HERTGKS"/>
<dbReference type="OrthoDB" id="422663at2759"/>
<dbReference type="PhylomeDB" id="Q8IBN8"/>
<dbReference type="Proteomes" id="UP000001450">
    <property type="component" value="Chromosome 7"/>
</dbReference>
<dbReference type="GO" id="GO:0005730">
    <property type="term" value="C:nucleolus"/>
    <property type="evidence" value="ECO:0000318"/>
    <property type="project" value="GO_Central"/>
</dbReference>
<dbReference type="GO" id="GO:0005524">
    <property type="term" value="F:ATP binding"/>
    <property type="evidence" value="ECO:0000250"/>
    <property type="project" value="GeneDB"/>
</dbReference>
<dbReference type="GO" id="GO:0016887">
    <property type="term" value="F:ATP hydrolysis activity"/>
    <property type="evidence" value="ECO:0007669"/>
    <property type="project" value="RHEA"/>
</dbReference>
<dbReference type="GO" id="GO:0003723">
    <property type="term" value="F:RNA binding"/>
    <property type="evidence" value="ECO:0000250"/>
    <property type="project" value="GeneDB"/>
</dbReference>
<dbReference type="GO" id="GO:0003724">
    <property type="term" value="F:RNA helicase activity"/>
    <property type="evidence" value="ECO:0000250"/>
    <property type="project" value="GeneDB"/>
</dbReference>
<dbReference type="GO" id="GO:0000463">
    <property type="term" value="P:maturation of LSU-rRNA from tricistronic rRNA transcript (SSU-rRNA, 5.8S rRNA, LSU-rRNA)"/>
    <property type="evidence" value="ECO:0000318"/>
    <property type="project" value="GO_Central"/>
</dbReference>
<dbReference type="GO" id="GO:0016070">
    <property type="term" value="P:RNA metabolic process"/>
    <property type="evidence" value="ECO:0000250"/>
    <property type="project" value="GeneDB"/>
</dbReference>
<dbReference type="CDD" id="cd18787">
    <property type="entry name" value="SF2_C_DEAD"/>
    <property type="match status" value="1"/>
</dbReference>
<dbReference type="FunFam" id="3.40.50.300:FF:001949">
    <property type="entry name" value="RNA helicase"/>
    <property type="match status" value="1"/>
</dbReference>
<dbReference type="Gene3D" id="3.40.50.300">
    <property type="entry name" value="P-loop containing nucleotide triphosphate hydrolases"/>
    <property type="match status" value="2"/>
</dbReference>
<dbReference type="InterPro" id="IPR011545">
    <property type="entry name" value="DEAD/DEAH_box_helicase_dom"/>
</dbReference>
<dbReference type="InterPro" id="IPR050079">
    <property type="entry name" value="DEAD_box_RNA_helicase"/>
</dbReference>
<dbReference type="InterPro" id="IPR014001">
    <property type="entry name" value="Helicase_ATP-bd"/>
</dbReference>
<dbReference type="InterPro" id="IPR001650">
    <property type="entry name" value="Helicase_C-like"/>
</dbReference>
<dbReference type="InterPro" id="IPR027417">
    <property type="entry name" value="P-loop_NTPase"/>
</dbReference>
<dbReference type="InterPro" id="IPR000629">
    <property type="entry name" value="RNA-helicase_DEAD-box_CS"/>
</dbReference>
<dbReference type="InterPro" id="IPR025313">
    <property type="entry name" value="SPB4-like_CTE"/>
</dbReference>
<dbReference type="PANTHER" id="PTHR47959:SF13">
    <property type="entry name" value="ATP-DEPENDENT RNA HELICASE RHLE"/>
    <property type="match status" value="1"/>
</dbReference>
<dbReference type="PANTHER" id="PTHR47959">
    <property type="entry name" value="ATP-DEPENDENT RNA HELICASE RHLE-RELATED"/>
    <property type="match status" value="1"/>
</dbReference>
<dbReference type="Pfam" id="PF13959">
    <property type="entry name" value="CTE_SPB4"/>
    <property type="match status" value="1"/>
</dbReference>
<dbReference type="Pfam" id="PF00270">
    <property type="entry name" value="DEAD"/>
    <property type="match status" value="1"/>
</dbReference>
<dbReference type="Pfam" id="PF00271">
    <property type="entry name" value="Helicase_C"/>
    <property type="match status" value="1"/>
</dbReference>
<dbReference type="SMART" id="SM00487">
    <property type="entry name" value="DEXDc"/>
    <property type="match status" value="1"/>
</dbReference>
<dbReference type="SMART" id="SM01178">
    <property type="entry name" value="DUF4217"/>
    <property type="match status" value="1"/>
</dbReference>
<dbReference type="SMART" id="SM00490">
    <property type="entry name" value="HELICc"/>
    <property type="match status" value="1"/>
</dbReference>
<dbReference type="SUPFAM" id="SSF52540">
    <property type="entry name" value="P-loop containing nucleoside triphosphate hydrolases"/>
    <property type="match status" value="2"/>
</dbReference>
<dbReference type="PROSITE" id="PS00039">
    <property type="entry name" value="DEAD_ATP_HELICASE"/>
    <property type="match status" value="1"/>
</dbReference>
<dbReference type="PROSITE" id="PS51192">
    <property type="entry name" value="HELICASE_ATP_BIND_1"/>
    <property type="match status" value="1"/>
</dbReference>
<dbReference type="PROSITE" id="PS51194">
    <property type="entry name" value="HELICASE_CTER"/>
    <property type="match status" value="1"/>
</dbReference>
<reference evidence="9" key="1">
    <citation type="journal article" date="2002" name="Nature">
        <title>Genome sequence of the human malaria parasite Plasmodium falciparum.</title>
        <authorList>
            <person name="Gardner M.J."/>
            <person name="Hall N."/>
            <person name="Fung E."/>
            <person name="White O."/>
            <person name="Berriman M."/>
            <person name="Hyman R.W."/>
            <person name="Carlton J.M."/>
            <person name="Pain A."/>
            <person name="Nelson K.E."/>
            <person name="Bowman S."/>
            <person name="Paulsen I.T."/>
            <person name="James K.D."/>
            <person name="Eisen J.A."/>
            <person name="Rutherford K.M."/>
            <person name="Salzberg S.L."/>
            <person name="Craig A."/>
            <person name="Kyes S."/>
            <person name="Chan M.-S."/>
            <person name="Nene V."/>
            <person name="Shallom S.J."/>
            <person name="Suh B."/>
            <person name="Peterson J."/>
            <person name="Angiuoli S."/>
            <person name="Pertea M."/>
            <person name="Allen J."/>
            <person name="Selengut J."/>
            <person name="Haft D."/>
            <person name="Mather M.W."/>
            <person name="Vaidya A.B."/>
            <person name="Martin D.M.A."/>
            <person name="Fairlamb A.H."/>
            <person name="Fraunholz M.J."/>
            <person name="Roos D.S."/>
            <person name="Ralph S.A."/>
            <person name="McFadden G.I."/>
            <person name="Cummings L.M."/>
            <person name="Subramanian G.M."/>
            <person name="Mungall C."/>
            <person name="Venter J.C."/>
            <person name="Carucci D.J."/>
            <person name="Hoffman S.L."/>
            <person name="Newbold C."/>
            <person name="Davis R.W."/>
            <person name="Fraser C.M."/>
            <person name="Barrell B.G."/>
        </authorList>
    </citation>
    <scope>NUCLEOTIDE SEQUENCE [LARGE SCALE GENOMIC DNA]</scope>
    <source>
        <strain evidence="9">3D7</strain>
    </source>
</reference>
<reference evidence="9" key="2">
    <citation type="journal article" date="2002" name="Nature">
        <title>Sequence of Plasmodium falciparum chromosomes 1, 3-9 and 13.</title>
        <authorList>
            <person name="Hall N."/>
            <person name="Pain A."/>
            <person name="Berriman M."/>
            <person name="Churcher C.M."/>
            <person name="Harris B."/>
            <person name="Harris D."/>
            <person name="Mungall K.L."/>
            <person name="Bowman S."/>
            <person name="Atkin R."/>
            <person name="Baker S."/>
            <person name="Barron A."/>
            <person name="Brooks K."/>
            <person name="Buckee C.O."/>
            <person name="Burrows C."/>
            <person name="Cherevach I."/>
            <person name="Chillingworth C."/>
            <person name="Chillingworth T."/>
            <person name="Christodoulou Z."/>
            <person name="Clark L."/>
            <person name="Clark R."/>
            <person name="Corton C."/>
            <person name="Cronin A."/>
            <person name="Davies R.M."/>
            <person name="Davis P."/>
            <person name="Dear P."/>
            <person name="Dearden F."/>
            <person name="Doggett J."/>
            <person name="Feltwell T."/>
            <person name="Goble A."/>
            <person name="Goodhead I."/>
            <person name="Gwilliam R."/>
            <person name="Hamlin N."/>
            <person name="Hance Z."/>
            <person name="Harper D."/>
            <person name="Hauser H."/>
            <person name="Hornsby T."/>
            <person name="Holroyd S."/>
            <person name="Horrocks P."/>
            <person name="Humphray S."/>
            <person name="Jagels K."/>
            <person name="James K.D."/>
            <person name="Johnson D."/>
            <person name="Kerhornou A."/>
            <person name="Knights A."/>
            <person name="Konfortov B."/>
            <person name="Kyes S."/>
            <person name="Larke N."/>
            <person name="Lawson D."/>
            <person name="Lennard N."/>
            <person name="Line A."/>
            <person name="Maddison M."/>
            <person name="Mclean J."/>
            <person name="Mooney P."/>
            <person name="Moule S."/>
            <person name="Murphy L."/>
            <person name="Oliver K."/>
            <person name="Ormond D."/>
            <person name="Price C."/>
            <person name="Quail M.A."/>
            <person name="Rabbinowitsch E."/>
            <person name="Rajandream M.A."/>
            <person name="Rutter S."/>
            <person name="Rutherford K.M."/>
            <person name="Sanders M."/>
            <person name="Simmonds M."/>
            <person name="Seeger K."/>
            <person name="Sharp S."/>
            <person name="Smith R."/>
            <person name="Squares R."/>
            <person name="Squares S."/>
            <person name="Stevens K."/>
            <person name="Taylor K."/>
            <person name="Tivey A."/>
            <person name="Unwin L."/>
            <person name="Whitehead S."/>
            <person name="Woodward J.R."/>
            <person name="Sulston J.E."/>
            <person name="Craig A."/>
            <person name="Newbold C."/>
            <person name="Barrell B.G."/>
        </authorList>
    </citation>
    <scope>NUCLEOTIDE SEQUENCE [LARGE SCALE GENOMIC DNA]</scope>
    <source>
        <strain evidence="9">3D7</strain>
    </source>
</reference>
<reference key="3">
    <citation type="journal article" date="2019" name="Heliyon">
        <title>Plasmodium falciparum DDX31 is DNA helicase localized in nucleolus.</title>
        <authorList>
            <person name="Yasmin R."/>
            <person name="Chauhan M."/>
            <person name="Sourabh S."/>
            <person name="Tuteja R."/>
        </authorList>
    </citation>
    <scope>FUNCTION AS A DNA HELICASE</scope>
    <scope>CATALYTIC ACTIVITY</scope>
    <scope>SUBCELLULAR LOCATION</scope>
    <scope>MUTAGENESIS OF LYS-223</scope>
</reference>
<organism evidence="8 9">
    <name type="scientific">Plasmodium falciparum (isolate 3D7)</name>
    <dbReference type="NCBI Taxonomy" id="36329"/>
    <lineage>
        <taxon>Eukaryota</taxon>
        <taxon>Sar</taxon>
        <taxon>Alveolata</taxon>
        <taxon>Apicomplexa</taxon>
        <taxon>Aconoidasida</taxon>
        <taxon>Haemosporida</taxon>
        <taxon>Plasmodiidae</taxon>
        <taxon>Plasmodium</taxon>
        <taxon>Plasmodium (Laverania)</taxon>
    </lineage>
</organism>